<sequence length="493" mass="54159">MNKHASQPRAIYYVVALQIWEYFSFYGMRALLILYLTNQLKYNDTHAYELFSAYCSLVYVTPILGGFLADKVLGNRMAVMLGALLMAIGHVVLGASEIHPSFLYLSLAIIVCGYGLFKSNVSCLLGELYEPTDPRRDGGFSLMYAAGNVGSIIAPIACGYAQEEYSWAMGFGLAAVGMIAGLVIFLCGNRHFTHTRGVNKKVLRATNFLLPNWGWLLVLLVATPALITILFWKEWSVYALIVATIIGLGVLAKIYRKAENQKQRKELGLIVTLTFFSMLFWAFAQQGGSSISLYIDRFVNRDMFGYTVPTAMFQSINAFAVMLCGVFLAWVVKESVAGNRTVRIWGKFALGLGLMSAGFCILTLSARWSAMYGHSSLPLMVLGLAVMGFAELFIDPVAMSQITRIEIPGVTGVLTGIYMLLSGAIANYLAGVIADQTSQASFDASGAINYSINAYIEVFDQITWGALACVGLVLMIWLYQALKFRNRALALES</sequence>
<dbReference type="EMBL" id="U00096">
    <property type="protein sequence ID" value="AAC73803.1"/>
    <property type="molecule type" value="Genomic_DNA"/>
</dbReference>
<dbReference type="EMBL" id="AP009048">
    <property type="protein sequence ID" value="BAA35368.2"/>
    <property type="molecule type" value="Genomic_DNA"/>
</dbReference>
<dbReference type="PIR" id="D64806">
    <property type="entry name" value="D64806"/>
</dbReference>
<dbReference type="RefSeq" id="NP_415237.1">
    <property type="nucleotide sequence ID" value="NC_000913.3"/>
</dbReference>
<dbReference type="RefSeq" id="WP_001032689.1">
    <property type="nucleotide sequence ID" value="NZ_SSZK01000033.1"/>
</dbReference>
<dbReference type="PDB" id="4Q65">
    <property type="method" value="X-ray"/>
    <property type="resolution" value="3.40 A"/>
    <property type="chains" value="A=1-493"/>
</dbReference>
<dbReference type="PDBsum" id="4Q65"/>
<dbReference type="SMR" id="P75742"/>
<dbReference type="BioGRID" id="4263335">
    <property type="interactions" value="112"/>
</dbReference>
<dbReference type="BioGRID" id="851691">
    <property type="interactions" value="1"/>
</dbReference>
<dbReference type="DIP" id="DIP-11394N"/>
<dbReference type="FunCoup" id="P75742">
    <property type="interactions" value="214"/>
</dbReference>
<dbReference type="IntAct" id="P75742">
    <property type="interactions" value="2"/>
</dbReference>
<dbReference type="STRING" id="511145.b0709"/>
<dbReference type="TCDB" id="2.A.17.1.4">
    <property type="family name" value="the proton-dependent oligopeptide transporter (pot/ptr) family"/>
</dbReference>
<dbReference type="PaxDb" id="511145-b0709"/>
<dbReference type="EnsemblBacteria" id="AAC73803">
    <property type="protein sequence ID" value="AAC73803"/>
    <property type="gene ID" value="b0709"/>
</dbReference>
<dbReference type="GeneID" id="947368"/>
<dbReference type="KEGG" id="ecj:JW0699"/>
<dbReference type="KEGG" id="eco:b0709"/>
<dbReference type="KEGG" id="ecoc:C3026_03545"/>
<dbReference type="PATRIC" id="fig|1411691.4.peg.1564"/>
<dbReference type="EchoBASE" id="EB3088"/>
<dbReference type="eggNOG" id="COG3104">
    <property type="taxonomic scope" value="Bacteria"/>
</dbReference>
<dbReference type="InParanoid" id="P75742"/>
<dbReference type="OMA" id="LCHTKNL"/>
<dbReference type="OrthoDB" id="9772725at2"/>
<dbReference type="PhylomeDB" id="P75742"/>
<dbReference type="BioCyc" id="EcoCyc:B0709-MONOMER"/>
<dbReference type="BioCyc" id="MetaCyc:B0709-MONOMER"/>
<dbReference type="EvolutionaryTrace" id="P75742"/>
<dbReference type="PRO" id="PR:P75742"/>
<dbReference type="Proteomes" id="UP000000625">
    <property type="component" value="Chromosome"/>
</dbReference>
<dbReference type="GO" id="GO:0005886">
    <property type="term" value="C:plasma membrane"/>
    <property type="evidence" value="ECO:0000314"/>
    <property type="project" value="EcoCyc"/>
</dbReference>
<dbReference type="GO" id="GO:0071916">
    <property type="term" value="F:dipeptide transmembrane transporter activity"/>
    <property type="evidence" value="ECO:0000314"/>
    <property type="project" value="EcoCyc"/>
</dbReference>
<dbReference type="GO" id="GO:0015333">
    <property type="term" value="F:peptide:proton symporter activity"/>
    <property type="evidence" value="ECO:0000318"/>
    <property type="project" value="GO_Central"/>
</dbReference>
<dbReference type="GO" id="GO:0042937">
    <property type="term" value="F:tripeptide transmembrane transporter activity"/>
    <property type="evidence" value="ECO:0000318"/>
    <property type="project" value="GO_Central"/>
</dbReference>
<dbReference type="GO" id="GO:0035442">
    <property type="term" value="P:dipeptide transmembrane transport"/>
    <property type="evidence" value="ECO:0000314"/>
    <property type="project" value="EcoCyc"/>
</dbReference>
<dbReference type="GO" id="GO:0015031">
    <property type="term" value="P:protein transport"/>
    <property type="evidence" value="ECO:0007669"/>
    <property type="project" value="UniProtKB-KW"/>
</dbReference>
<dbReference type="CDD" id="cd17346">
    <property type="entry name" value="MFS_DtpA_like"/>
    <property type="match status" value="1"/>
</dbReference>
<dbReference type="FunFam" id="1.20.1250.20:FF:000035">
    <property type="entry name" value="Dipeptide permease D"/>
    <property type="match status" value="1"/>
</dbReference>
<dbReference type="Gene3D" id="1.20.1250.20">
    <property type="entry name" value="MFS general substrate transporter like domains"/>
    <property type="match status" value="1"/>
</dbReference>
<dbReference type="HAMAP" id="MF_01880">
    <property type="entry name" value="PTR2_DtpD_subfam"/>
    <property type="match status" value="1"/>
</dbReference>
<dbReference type="InterPro" id="IPR023777">
    <property type="entry name" value="AA/pep_transptr_DtpD"/>
</dbReference>
<dbReference type="InterPro" id="IPR005279">
    <property type="entry name" value="Dipep/tripep_permease"/>
</dbReference>
<dbReference type="InterPro" id="IPR020846">
    <property type="entry name" value="MFS_dom"/>
</dbReference>
<dbReference type="InterPro" id="IPR036259">
    <property type="entry name" value="MFS_trans_sf"/>
</dbReference>
<dbReference type="InterPro" id="IPR050171">
    <property type="entry name" value="MFS_Transporters"/>
</dbReference>
<dbReference type="InterPro" id="IPR000109">
    <property type="entry name" value="POT_fam"/>
</dbReference>
<dbReference type="InterPro" id="IPR018456">
    <property type="entry name" value="PTR2_symporter_CS"/>
</dbReference>
<dbReference type="NCBIfam" id="NF012006">
    <property type="entry name" value="PRK15462.1"/>
    <property type="match status" value="1"/>
</dbReference>
<dbReference type="NCBIfam" id="TIGR00924">
    <property type="entry name" value="yjdL_sub1_fam"/>
    <property type="match status" value="1"/>
</dbReference>
<dbReference type="PANTHER" id="PTHR23517:SF15">
    <property type="entry name" value="PROTON-DEPENDENT OLIGOPEPTIDE FAMILY TRANSPORT PROTEIN"/>
    <property type="match status" value="1"/>
</dbReference>
<dbReference type="PANTHER" id="PTHR23517">
    <property type="entry name" value="RESISTANCE PROTEIN MDTM, PUTATIVE-RELATED-RELATED"/>
    <property type="match status" value="1"/>
</dbReference>
<dbReference type="Pfam" id="PF00854">
    <property type="entry name" value="PTR2"/>
    <property type="match status" value="1"/>
</dbReference>
<dbReference type="SUPFAM" id="SSF103473">
    <property type="entry name" value="MFS general substrate transporter"/>
    <property type="match status" value="1"/>
</dbReference>
<dbReference type="PROSITE" id="PS50850">
    <property type="entry name" value="MFS"/>
    <property type="match status" value="1"/>
</dbReference>
<dbReference type="PROSITE" id="PS01022">
    <property type="entry name" value="PTR2_1"/>
    <property type="match status" value="1"/>
</dbReference>
<dbReference type="PROSITE" id="PS01023">
    <property type="entry name" value="PTR2_2"/>
    <property type="match status" value="1"/>
</dbReference>
<feature type="chain" id="PRO_0000064328" description="Dipeptide permease D">
    <location>
        <begin position="1"/>
        <end position="493"/>
    </location>
</feature>
<feature type="topological domain" description="Cytoplasmic" evidence="2">
    <location>
        <begin position="1"/>
        <end position="13"/>
    </location>
</feature>
<feature type="transmembrane region" description="Helical" evidence="2">
    <location>
        <begin position="14"/>
        <end position="34"/>
    </location>
</feature>
<feature type="topological domain" description="Periplasmic" evidence="2">
    <location>
        <begin position="35"/>
        <end position="48"/>
    </location>
</feature>
<feature type="transmembrane region" description="Helical" evidence="2">
    <location>
        <begin position="49"/>
        <end position="69"/>
    </location>
</feature>
<feature type="topological domain" description="Cytoplasmic" evidence="2">
    <location>
        <begin position="70"/>
        <end position="77"/>
    </location>
</feature>
<feature type="transmembrane region" description="Helical" evidence="2">
    <location>
        <begin position="78"/>
        <end position="98"/>
    </location>
</feature>
<feature type="topological domain" description="Periplasmic" evidence="2">
    <location>
        <begin position="99"/>
        <end position="100"/>
    </location>
</feature>
<feature type="transmembrane region" description="Helical" evidence="2">
    <location>
        <begin position="101"/>
        <end position="121"/>
    </location>
</feature>
<feature type="topological domain" description="Cytoplasmic" evidence="2">
    <location>
        <begin position="122"/>
        <end position="137"/>
    </location>
</feature>
<feature type="transmembrane region" description="Helical" evidence="2">
    <location>
        <begin position="138"/>
        <end position="158"/>
    </location>
</feature>
<feature type="topological domain" description="Periplasmic" evidence="2">
    <location>
        <begin position="159"/>
        <end position="166"/>
    </location>
</feature>
<feature type="transmembrane region" description="Helical" evidence="2">
    <location>
        <begin position="167"/>
        <end position="187"/>
    </location>
</feature>
<feature type="topological domain" description="Cytoplasmic" evidence="2">
    <location>
        <begin position="188"/>
        <end position="211"/>
    </location>
</feature>
<feature type="transmembrane region" description="Helical" evidence="2">
    <location>
        <begin position="212"/>
        <end position="232"/>
    </location>
</feature>
<feature type="topological domain" description="Periplasmic" evidence="2">
    <location>
        <begin position="233"/>
        <end position="234"/>
    </location>
</feature>
<feature type="transmembrane region" description="Helical" evidence="2">
    <location>
        <begin position="235"/>
        <end position="255"/>
    </location>
</feature>
<feature type="topological domain" description="Cytoplasmic" evidence="2">
    <location>
        <begin position="256"/>
        <end position="266"/>
    </location>
</feature>
<feature type="transmembrane region" description="Helical" evidence="2">
    <location>
        <begin position="267"/>
        <end position="287"/>
    </location>
</feature>
<feature type="topological domain" description="Periplasmic" evidence="2">
    <location>
        <begin position="288"/>
        <end position="311"/>
    </location>
</feature>
<feature type="transmembrane region" description="Helical" evidence="2">
    <location>
        <begin position="312"/>
        <end position="332"/>
    </location>
</feature>
<feature type="topological domain" description="Cytoplasmic" evidence="2">
    <location>
        <begin position="333"/>
        <end position="343"/>
    </location>
</feature>
<feature type="transmembrane region" description="Helical" evidence="2">
    <location>
        <begin position="344"/>
        <end position="364"/>
    </location>
</feature>
<feature type="topological domain" description="Periplasmic" evidence="2">
    <location>
        <begin position="365"/>
        <end position="378"/>
    </location>
</feature>
<feature type="transmembrane region" description="Helical" evidence="2">
    <location>
        <begin position="379"/>
        <end position="399"/>
    </location>
</feature>
<feature type="topological domain" description="Cytoplasmic" evidence="2">
    <location>
        <begin position="400"/>
        <end position="412"/>
    </location>
</feature>
<feature type="transmembrane region" description="Helical" evidence="2">
    <location>
        <begin position="413"/>
        <end position="433"/>
    </location>
</feature>
<feature type="topological domain" description="Periplasmic" evidence="2">
    <location>
        <begin position="434"/>
        <end position="461"/>
    </location>
</feature>
<feature type="transmembrane region" description="Helical" evidence="2">
    <location>
        <begin position="462"/>
        <end position="482"/>
    </location>
</feature>
<feature type="topological domain" description="Cytoplasmic" evidence="2">
    <location>
        <begin position="483"/>
        <end position="493"/>
    </location>
</feature>
<feature type="helix" evidence="4">
    <location>
        <begin position="9"/>
        <end position="38"/>
    </location>
</feature>
<feature type="strand" evidence="4">
    <location>
        <begin position="39"/>
        <end position="41"/>
    </location>
</feature>
<feature type="helix" evidence="4">
    <location>
        <begin position="44"/>
        <end position="60"/>
    </location>
</feature>
<feature type="helix" evidence="4">
    <location>
        <begin position="62"/>
        <end position="71"/>
    </location>
</feature>
<feature type="helix" evidence="4">
    <location>
        <begin position="77"/>
        <end position="92"/>
    </location>
</feature>
<feature type="turn" evidence="4">
    <location>
        <begin position="99"/>
        <end position="101"/>
    </location>
</feature>
<feature type="helix" evidence="4">
    <location>
        <begin position="102"/>
        <end position="126"/>
    </location>
</feature>
<feature type="helix" evidence="4">
    <location>
        <begin position="135"/>
        <end position="162"/>
    </location>
</feature>
<feature type="turn" evidence="4">
    <location>
        <begin position="163"/>
        <end position="165"/>
    </location>
</feature>
<feature type="helix" evidence="4">
    <location>
        <begin position="167"/>
        <end position="186"/>
    </location>
</feature>
<feature type="strand" evidence="4">
    <location>
        <begin position="207"/>
        <end position="209"/>
    </location>
</feature>
<feature type="helix" evidence="4">
    <location>
        <begin position="212"/>
        <end position="232"/>
    </location>
</feature>
<feature type="helix" evidence="4">
    <location>
        <begin position="234"/>
        <end position="254"/>
    </location>
</feature>
<feature type="helix" evidence="4">
    <location>
        <begin position="267"/>
        <end position="297"/>
    </location>
</feature>
<feature type="helix" evidence="4">
    <location>
        <begin position="310"/>
        <end position="313"/>
    </location>
</feature>
<feature type="helix" evidence="4">
    <location>
        <begin position="314"/>
        <end position="331"/>
    </location>
</feature>
<feature type="helix" evidence="4">
    <location>
        <begin position="342"/>
        <end position="369"/>
    </location>
</feature>
<feature type="helix" evidence="4">
    <location>
        <begin position="379"/>
        <end position="393"/>
    </location>
</feature>
<feature type="strand" evidence="4">
    <location>
        <begin position="394"/>
        <end position="396"/>
    </location>
</feature>
<feature type="helix" evidence="4">
    <location>
        <begin position="397"/>
        <end position="403"/>
    </location>
</feature>
<feature type="helix" evidence="4">
    <location>
        <begin position="411"/>
        <end position="437"/>
    </location>
</feature>
<feature type="helix" evidence="4">
    <location>
        <begin position="452"/>
        <end position="480"/>
    </location>
</feature>
<evidence type="ECO:0000250" key="1"/>
<evidence type="ECO:0000255" key="2"/>
<evidence type="ECO:0000305" key="3"/>
<evidence type="ECO:0007829" key="4">
    <source>
        <dbReference type="PDB" id="4Q65"/>
    </source>
</evidence>
<protein>
    <recommendedName>
        <fullName>Dipeptide permease D</fullName>
    </recommendedName>
</protein>
<proteinExistence type="evidence at protein level"/>
<keyword id="KW-0002">3D-structure</keyword>
<keyword id="KW-0997">Cell inner membrane</keyword>
<keyword id="KW-1003">Cell membrane</keyword>
<keyword id="KW-0472">Membrane</keyword>
<keyword id="KW-0571">Peptide transport</keyword>
<keyword id="KW-0653">Protein transport</keyword>
<keyword id="KW-1185">Reference proteome</keyword>
<keyword id="KW-0812">Transmembrane</keyword>
<keyword id="KW-1133">Transmembrane helix</keyword>
<keyword id="KW-0813">Transport</keyword>
<name>DTPD_ECOLI</name>
<reference key="1">
    <citation type="journal article" date="1996" name="DNA Res.">
        <title>A 718-kb DNA sequence of the Escherichia coli K-12 genome corresponding to the 12.7-28.0 min region on the linkage map.</title>
        <authorList>
            <person name="Oshima T."/>
            <person name="Aiba H."/>
            <person name="Baba T."/>
            <person name="Fujita K."/>
            <person name="Hayashi K."/>
            <person name="Honjo A."/>
            <person name="Ikemoto K."/>
            <person name="Inada T."/>
            <person name="Itoh T."/>
            <person name="Kajihara M."/>
            <person name="Kanai K."/>
            <person name="Kashimoto K."/>
            <person name="Kimura S."/>
            <person name="Kitagawa M."/>
            <person name="Makino K."/>
            <person name="Masuda S."/>
            <person name="Miki T."/>
            <person name="Mizobuchi K."/>
            <person name="Mori H."/>
            <person name="Motomura K."/>
            <person name="Nakamura Y."/>
            <person name="Nashimoto H."/>
            <person name="Nishio Y."/>
            <person name="Saito N."/>
            <person name="Sampei G."/>
            <person name="Seki Y."/>
            <person name="Tagami H."/>
            <person name="Takemoto K."/>
            <person name="Wada C."/>
            <person name="Yamamoto Y."/>
            <person name="Yano M."/>
            <person name="Horiuchi T."/>
        </authorList>
    </citation>
    <scope>NUCLEOTIDE SEQUENCE [LARGE SCALE GENOMIC DNA]</scope>
    <source>
        <strain>K12 / W3110 / ATCC 27325 / DSM 5911</strain>
    </source>
</reference>
<reference key="2">
    <citation type="journal article" date="1997" name="Science">
        <title>The complete genome sequence of Escherichia coli K-12.</title>
        <authorList>
            <person name="Blattner F.R."/>
            <person name="Plunkett G. III"/>
            <person name="Bloch C.A."/>
            <person name="Perna N.T."/>
            <person name="Burland V."/>
            <person name="Riley M."/>
            <person name="Collado-Vides J."/>
            <person name="Glasner J.D."/>
            <person name="Rode C.K."/>
            <person name="Mayhew G.F."/>
            <person name="Gregor J."/>
            <person name="Davis N.W."/>
            <person name="Kirkpatrick H.A."/>
            <person name="Goeden M.A."/>
            <person name="Rose D.J."/>
            <person name="Mau B."/>
            <person name="Shao Y."/>
        </authorList>
    </citation>
    <scope>NUCLEOTIDE SEQUENCE [LARGE SCALE GENOMIC DNA]</scope>
    <source>
        <strain>K12 / MG1655 / ATCC 47076</strain>
    </source>
</reference>
<reference key="3">
    <citation type="journal article" date="2006" name="Mol. Syst. Biol.">
        <title>Highly accurate genome sequences of Escherichia coli K-12 strains MG1655 and W3110.</title>
        <authorList>
            <person name="Hayashi K."/>
            <person name="Morooka N."/>
            <person name="Yamamoto Y."/>
            <person name="Fujita K."/>
            <person name="Isono K."/>
            <person name="Choi S."/>
            <person name="Ohtsubo E."/>
            <person name="Baba T."/>
            <person name="Wanner B.L."/>
            <person name="Mori H."/>
            <person name="Horiuchi T."/>
        </authorList>
    </citation>
    <scope>NUCLEOTIDE SEQUENCE [LARGE SCALE GENOMIC DNA]</scope>
    <source>
        <strain>K12 / W3110 / ATCC 27325 / DSM 5911</strain>
    </source>
</reference>
<reference key="4">
    <citation type="journal article" date="2005" name="Science">
        <title>Global topology analysis of the Escherichia coli inner membrane proteome.</title>
        <authorList>
            <person name="Daley D.O."/>
            <person name="Rapp M."/>
            <person name="Granseth E."/>
            <person name="Melen K."/>
            <person name="Drew D."/>
            <person name="von Heijne G."/>
        </authorList>
    </citation>
    <scope>TOPOLOGY [LARGE SCALE ANALYSIS]</scope>
    <source>
        <strain>K12 / MG1655 / ATCC 47076</strain>
    </source>
</reference>
<accession>P75742</accession>
<gene>
    <name type="primary">dtpD</name>
    <name type="synonym">ybgH</name>
    <name type="ordered locus">b0709</name>
    <name type="ordered locus">JW0699</name>
</gene>
<comment type="function">
    <text evidence="1">Probable proton-dependent permease that transports dipeptides.</text>
</comment>
<comment type="subcellular location">
    <subcellularLocation>
        <location>Cell inner membrane</location>
        <topology>Multi-pass membrane protein</topology>
    </subcellularLocation>
</comment>
<comment type="similarity">
    <text evidence="3">Belongs to the major facilitator superfamily. Proton-dependent oligopeptide transporter (POT/PTR) (TC 2.A.17) family. DtpD subfamily.</text>
</comment>
<organism>
    <name type="scientific">Escherichia coli (strain K12)</name>
    <dbReference type="NCBI Taxonomy" id="83333"/>
    <lineage>
        <taxon>Bacteria</taxon>
        <taxon>Pseudomonadati</taxon>
        <taxon>Pseudomonadota</taxon>
        <taxon>Gammaproteobacteria</taxon>
        <taxon>Enterobacterales</taxon>
        <taxon>Enterobacteriaceae</taxon>
        <taxon>Escherichia</taxon>
    </lineage>
</organism>